<reference key="1">
    <citation type="submission" date="2007-03" db="EMBL/GenBank/DDBJ databases">
        <title>Complete sequence of Desulfotomaculum reducens MI-1.</title>
        <authorList>
            <consortium name="US DOE Joint Genome Institute"/>
            <person name="Copeland A."/>
            <person name="Lucas S."/>
            <person name="Lapidus A."/>
            <person name="Barry K."/>
            <person name="Detter J.C."/>
            <person name="Glavina del Rio T."/>
            <person name="Hammon N."/>
            <person name="Israni S."/>
            <person name="Dalin E."/>
            <person name="Tice H."/>
            <person name="Pitluck S."/>
            <person name="Sims D."/>
            <person name="Brettin T."/>
            <person name="Bruce D."/>
            <person name="Han C."/>
            <person name="Tapia R."/>
            <person name="Schmutz J."/>
            <person name="Larimer F."/>
            <person name="Land M."/>
            <person name="Hauser L."/>
            <person name="Kyrpides N."/>
            <person name="Kim E."/>
            <person name="Tebo B.M."/>
            <person name="Richardson P."/>
        </authorList>
    </citation>
    <scope>NUCLEOTIDE SEQUENCE [LARGE SCALE GENOMIC DNA]</scope>
    <source>
        <strain>ATCC BAA-1160 / DSM 100696 / MI-1</strain>
    </source>
</reference>
<evidence type="ECO:0000255" key="1">
    <source>
        <dbReference type="HAMAP-Rule" id="MF_01576"/>
    </source>
</evidence>
<accession>A4J3F5</accession>
<keyword id="KW-0028">Amino-acid biosynthesis</keyword>
<keyword id="KW-0368">Histidine biosynthesis</keyword>
<keyword id="KW-0378">Hydrolase</keyword>
<keyword id="KW-0486">Methionine biosynthesis</keyword>
<keyword id="KW-0511">Multifunctional enzyme</keyword>
<keyword id="KW-0521">NADP</keyword>
<keyword id="KW-0554">One-carbon metabolism</keyword>
<keyword id="KW-0560">Oxidoreductase</keyword>
<keyword id="KW-0658">Purine biosynthesis</keyword>
<keyword id="KW-1185">Reference proteome</keyword>
<dbReference type="EC" id="1.5.1.5" evidence="1"/>
<dbReference type="EC" id="3.5.4.9" evidence="1"/>
<dbReference type="EMBL" id="CP000612">
    <property type="protein sequence ID" value="ABO49608.1"/>
    <property type="molecule type" value="Genomic_DNA"/>
</dbReference>
<dbReference type="RefSeq" id="WP_011877434.1">
    <property type="nucleotide sequence ID" value="NC_009253.1"/>
</dbReference>
<dbReference type="SMR" id="A4J3F5"/>
<dbReference type="STRING" id="349161.Dred_1073"/>
<dbReference type="KEGG" id="drm:Dred_1073"/>
<dbReference type="eggNOG" id="COG0190">
    <property type="taxonomic scope" value="Bacteria"/>
</dbReference>
<dbReference type="HOGENOM" id="CLU_034045_2_1_9"/>
<dbReference type="OrthoDB" id="9803580at2"/>
<dbReference type="UniPathway" id="UPA00193"/>
<dbReference type="Proteomes" id="UP000001556">
    <property type="component" value="Chromosome"/>
</dbReference>
<dbReference type="GO" id="GO:0005829">
    <property type="term" value="C:cytosol"/>
    <property type="evidence" value="ECO:0007669"/>
    <property type="project" value="TreeGrafter"/>
</dbReference>
<dbReference type="GO" id="GO:0004477">
    <property type="term" value="F:methenyltetrahydrofolate cyclohydrolase activity"/>
    <property type="evidence" value="ECO:0007669"/>
    <property type="project" value="UniProtKB-UniRule"/>
</dbReference>
<dbReference type="GO" id="GO:0004488">
    <property type="term" value="F:methylenetetrahydrofolate dehydrogenase (NADP+) activity"/>
    <property type="evidence" value="ECO:0007669"/>
    <property type="project" value="UniProtKB-UniRule"/>
</dbReference>
<dbReference type="GO" id="GO:0000105">
    <property type="term" value="P:L-histidine biosynthetic process"/>
    <property type="evidence" value="ECO:0007669"/>
    <property type="project" value="UniProtKB-KW"/>
</dbReference>
<dbReference type="GO" id="GO:0009086">
    <property type="term" value="P:methionine biosynthetic process"/>
    <property type="evidence" value="ECO:0007669"/>
    <property type="project" value="UniProtKB-KW"/>
</dbReference>
<dbReference type="GO" id="GO:0006164">
    <property type="term" value="P:purine nucleotide biosynthetic process"/>
    <property type="evidence" value="ECO:0007669"/>
    <property type="project" value="UniProtKB-KW"/>
</dbReference>
<dbReference type="GO" id="GO:0035999">
    <property type="term" value="P:tetrahydrofolate interconversion"/>
    <property type="evidence" value="ECO:0007669"/>
    <property type="project" value="UniProtKB-UniRule"/>
</dbReference>
<dbReference type="CDD" id="cd01080">
    <property type="entry name" value="NAD_bind_m-THF_DH_Cyclohyd"/>
    <property type="match status" value="1"/>
</dbReference>
<dbReference type="FunFam" id="3.40.50.720:FF:000094">
    <property type="entry name" value="Bifunctional protein FolD"/>
    <property type="match status" value="1"/>
</dbReference>
<dbReference type="FunFam" id="3.40.50.10860:FF:000005">
    <property type="entry name" value="C-1-tetrahydrofolate synthase, cytoplasmic, putative"/>
    <property type="match status" value="1"/>
</dbReference>
<dbReference type="Gene3D" id="3.40.50.10860">
    <property type="entry name" value="Leucine Dehydrogenase, chain A, domain 1"/>
    <property type="match status" value="1"/>
</dbReference>
<dbReference type="Gene3D" id="3.40.50.720">
    <property type="entry name" value="NAD(P)-binding Rossmann-like Domain"/>
    <property type="match status" value="1"/>
</dbReference>
<dbReference type="HAMAP" id="MF_01576">
    <property type="entry name" value="THF_DHG_CYH"/>
    <property type="match status" value="1"/>
</dbReference>
<dbReference type="InterPro" id="IPR046346">
    <property type="entry name" value="Aminoacid_DH-like_N_sf"/>
</dbReference>
<dbReference type="InterPro" id="IPR036291">
    <property type="entry name" value="NAD(P)-bd_dom_sf"/>
</dbReference>
<dbReference type="InterPro" id="IPR000672">
    <property type="entry name" value="THF_DH/CycHdrlase"/>
</dbReference>
<dbReference type="InterPro" id="IPR020630">
    <property type="entry name" value="THF_DH/CycHdrlase_cat_dom"/>
</dbReference>
<dbReference type="InterPro" id="IPR020631">
    <property type="entry name" value="THF_DH/CycHdrlase_NAD-bd_dom"/>
</dbReference>
<dbReference type="PANTHER" id="PTHR48099:SF5">
    <property type="entry name" value="C-1-TETRAHYDROFOLATE SYNTHASE, CYTOPLASMIC"/>
    <property type="match status" value="1"/>
</dbReference>
<dbReference type="PANTHER" id="PTHR48099">
    <property type="entry name" value="C-1-TETRAHYDROFOLATE SYNTHASE, CYTOPLASMIC-RELATED"/>
    <property type="match status" value="1"/>
</dbReference>
<dbReference type="Pfam" id="PF00763">
    <property type="entry name" value="THF_DHG_CYH"/>
    <property type="match status" value="1"/>
</dbReference>
<dbReference type="Pfam" id="PF02882">
    <property type="entry name" value="THF_DHG_CYH_C"/>
    <property type="match status" value="1"/>
</dbReference>
<dbReference type="PRINTS" id="PR00085">
    <property type="entry name" value="THFDHDRGNASE"/>
</dbReference>
<dbReference type="SUPFAM" id="SSF53223">
    <property type="entry name" value="Aminoacid dehydrogenase-like, N-terminal domain"/>
    <property type="match status" value="1"/>
</dbReference>
<dbReference type="SUPFAM" id="SSF51735">
    <property type="entry name" value="NAD(P)-binding Rossmann-fold domains"/>
    <property type="match status" value="1"/>
</dbReference>
<comment type="function">
    <text evidence="1">Catalyzes the oxidation of 5,10-methylenetetrahydrofolate to 5,10-methenyltetrahydrofolate and then the hydrolysis of 5,10-methenyltetrahydrofolate to 10-formyltetrahydrofolate.</text>
</comment>
<comment type="catalytic activity">
    <reaction evidence="1">
        <text>(6R)-5,10-methylene-5,6,7,8-tetrahydrofolate + NADP(+) = (6R)-5,10-methenyltetrahydrofolate + NADPH</text>
        <dbReference type="Rhea" id="RHEA:22812"/>
        <dbReference type="ChEBI" id="CHEBI:15636"/>
        <dbReference type="ChEBI" id="CHEBI:57455"/>
        <dbReference type="ChEBI" id="CHEBI:57783"/>
        <dbReference type="ChEBI" id="CHEBI:58349"/>
        <dbReference type="EC" id="1.5.1.5"/>
    </reaction>
</comment>
<comment type="catalytic activity">
    <reaction evidence="1">
        <text>(6R)-5,10-methenyltetrahydrofolate + H2O = (6R)-10-formyltetrahydrofolate + H(+)</text>
        <dbReference type="Rhea" id="RHEA:23700"/>
        <dbReference type="ChEBI" id="CHEBI:15377"/>
        <dbReference type="ChEBI" id="CHEBI:15378"/>
        <dbReference type="ChEBI" id="CHEBI:57455"/>
        <dbReference type="ChEBI" id="CHEBI:195366"/>
        <dbReference type="EC" id="3.5.4.9"/>
    </reaction>
</comment>
<comment type="pathway">
    <text evidence="1">One-carbon metabolism; tetrahydrofolate interconversion.</text>
</comment>
<comment type="subunit">
    <text evidence="1">Homodimer.</text>
</comment>
<comment type="similarity">
    <text evidence="1">Belongs to the tetrahydrofolate dehydrogenase/cyclohydrolase family.</text>
</comment>
<gene>
    <name evidence="1" type="primary">folD</name>
    <name type="ordered locus">Dred_1073</name>
</gene>
<organism>
    <name type="scientific">Desulforamulus reducens (strain ATCC BAA-1160 / DSM 100696 / MI-1)</name>
    <name type="common">Desulfotomaculum reducens</name>
    <dbReference type="NCBI Taxonomy" id="349161"/>
    <lineage>
        <taxon>Bacteria</taxon>
        <taxon>Bacillati</taxon>
        <taxon>Bacillota</taxon>
        <taxon>Clostridia</taxon>
        <taxon>Eubacteriales</taxon>
        <taxon>Peptococcaceae</taxon>
        <taxon>Desulforamulus</taxon>
    </lineage>
</organism>
<protein>
    <recommendedName>
        <fullName evidence="1">Bifunctional protein FolD</fullName>
    </recommendedName>
    <domain>
        <recommendedName>
            <fullName evidence="1">Methylenetetrahydrofolate dehydrogenase</fullName>
            <ecNumber evidence="1">1.5.1.5</ecNumber>
        </recommendedName>
    </domain>
    <domain>
        <recommendedName>
            <fullName evidence="1">Methenyltetrahydrofolate cyclohydrolase</fullName>
            <ecNumber evidence="1">3.5.4.9</ecNumber>
        </recommendedName>
    </domain>
</protein>
<sequence length="284" mass="30460">MTKILDGKKIASILREELKQDIITLKERGIEPKLAVVLVGEDPASVAYAKFLQKVSENAGVLFELHQLSKSTAEEEIICKIEDLNQIQAVHGILMMMPLPPHVNKQHIMEHISPLKDVDGLHPFNRGHLISGGICLHPATPTSCLEILKRSGITLAGKHIVVVGRGETVGKPLVFMALAENATVTVCHSRTVDLGKFTKQADIIISAVGKPGLITADMIKPGAVVVDAGIHEEAGNIIGDVDYEQVKEIAEAITPVPGGVGSLTTVLMLKNVLKGIQLQIGTQE</sequence>
<name>FOLD_DESRM</name>
<proteinExistence type="inferred from homology"/>
<feature type="chain" id="PRO_1000073608" description="Bifunctional protein FolD">
    <location>
        <begin position="1"/>
        <end position="284"/>
    </location>
</feature>
<feature type="binding site" evidence="1">
    <location>
        <begin position="164"/>
        <end position="166"/>
    </location>
    <ligand>
        <name>NADP(+)</name>
        <dbReference type="ChEBI" id="CHEBI:58349"/>
    </ligand>
</feature>
<feature type="binding site" evidence="1">
    <location>
        <position position="189"/>
    </location>
    <ligand>
        <name>NADP(+)</name>
        <dbReference type="ChEBI" id="CHEBI:58349"/>
    </ligand>
</feature>
<feature type="binding site" evidence="1">
    <location>
        <position position="230"/>
    </location>
    <ligand>
        <name>NADP(+)</name>
        <dbReference type="ChEBI" id="CHEBI:58349"/>
    </ligand>
</feature>